<organism>
    <name type="scientific">Meles meles</name>
    <name type="common">Eurasian badger</name>
    <dbReference type="NCBI Taxonomy" id="9662"/>
    <lineage>
        <taxon>Eukaryota</taxon>
        <taxon>Metazoa</taxon>
        <taxon>Chordata</taxon>
        <taxon>Craniata</taxon>
        <taxon>Vertebrata</taxon>
        <taxon>Euteleostomi</taxon>
        <taxon>Mammalia</taxon>
        <taxon>Eutheria</taxon>
        <taxon>Laurasiatheria</taxon>
        <taxon>Carnivora</taxon>
        <taxon>Caniformia</taxon>
        <taxon>Musteloidea</taxon>
        <taxon>Mustelidae</taxon>
        <taxon>Melinae</taxon>
        <taxon>Meles</taxon>
    </lineage>
</organism>
<sequence>APPPVGDQAGGRKVNCSKYNAKGSQFACSRHLDPVCGTDHRTYSNECMFCMLTQNKRFSVRILQDNNCDIECTQYSDMCTMDYLPLCGSDGNNYSNKCLFCNAVLRSRGALFLAKHGQCESP</sequence>
<comment type="function">
    <text>This inhibitor is composed of two homologous actively inhibiting halves: one which inhibits trypsin, the other which inhibits elastase.</text>
</comment>
<comment type="subcellular location">
    <subcellularLocation>
        <location>Secreted</location>
    </subcellularLocation>
</comment>
<accession>P16226</accession>
<protein>
    <recommendedName>
        <fullName>Double-headed protease inhibitor, submandibular gland</fullName>
    </recommendedName>
</protein>
<proteinExistence type="evidence at protein level"/>
<reference key="1">
    <citation type="journal article" date="1989" name="Protein Seq. Data Anal.">
        <title>The amino-acid sequence of the double-headed proteinase inhibitor from badger (Meles meles) submandibular glands.</title>
        <authorList>
            <person name="Hochstrasser K."/>
            <person name="Paulus M."/>
            <person name="Wachter E."/>
            <person name="Reisinger P.W.M."/>
        </authorList>
    </citation>
    <scope>PROTEIN SEQUENCE</scope>
    <source>
        <tissue>Submandibular gland</tissue>
    </source>
</reference>
<evidence type="ECO:0000255" key="1">
    <source>
        <dbReference type="PROSITE-ProRule" id="PRU00798"/>
    </source>
</evidence>
<name>IPSG_MELME</name>
<dbReference type="SMR" id="P16226"/>
<dbReference type="MEROPS" id="I01.016"/>
<dbReference type="MEROPS" id="I01.017"/>
<dbReference type="GO" id="GO:0005576">
    <property type="term" value="C:extracellular region"/>
    <property type="evidence" value="ECO:0007669"/>
    <property type="project" value="UniProtKB-SubCell"/>
</dbReference>
<dbReference type="GO" id="GO:0004867">
    <property type="term" value="F:serine-type endopeptidase inhibitor activity"/>
    <property type="evidence" value="ECO:0007669"/>
    <property type="project" value="UniProtKB-KW"/>
</dbReference>
<dbReference type="CDD" id="cd01327">
    <property type="entry name" value="KAZAL_PSTI"/>
    <property type="match status" value="1"/>
</dbReference>
<dbReference type="FunFam" id="3.30.60.30:FF:000037">
    <property type="entry name" value="Ovomucoid"/>
    <property type="match status" value="1"/>
</dbReference>
<dbReference type="Gene3D" id="3.30.60.30">
    <property type="match status" value="2"/>
</dbReference>
<dbReference type="InterPro" id="IPR051597">
    <property type="entry name" value="Bifunctional_prot_inhibitor"/>
</dbReference>
<dbReference type="InterPro" id="IPR002350">
    <property type="entry name" value="Kazal_dom"/>
</dbReference>
<dbReference type="InterPro" id="IPR036058">
    <property type="entry name" value="Kazal_dom_sf"/>
</dbReference>
<dbReference type="InterPro" id="IPR001239">
    <property type="entry name" value="Prot_inh_Kazal-m"/>
</dbReference>
<dbReference type="PANTHER" id="PTHR47729:SF1">
    <property type="entry name" value="OVOMUCOID-LIKE-RELATED"/>
    <property type="match status" value="1"/>
</dbReference>
<dbReference type="PANTHER" id="PTHR47729">
    <property type="entry name" value="SERINE PEPTIDASE INHIBITOR, KAZAL TYPE 2, TANDEM DUPLICATE 1-RELATED"/>
    <property type="match status" value="1"/>
</dbReference>
<dbReference type="Pfam" id="PF00050">
    <property type="entry name" value="Kazal_1"/>
    <property type="match status" value="2"/>
</dbReference>
<dbReference type="PRINTS" id="PR00290">
    <property type="entry name" value="KAZALINHBTR"/>
</dbReference>
<dbReference type="SMART" id="SM00280">
    <property type="entry name" value="KAZAL"/>
    <property type="match status" value="2"/>
</dbReference>
<dbReference type="SUPFAM" id="SSF100895">
    <property type="entry name" value="Kazal-type serine protease inhibitors"/>
    <property type="match status" value="2"/>
</dbReference>
<dbReference type="PROSITE" id="PS00282">
    <property type="entry name" value="KAZAL_1"/>
    <property type="match status" value="2"/>
</dbReference>
<dbReference type="PROSITE" id="PS51465">
    <property type="entry name" value="KAZAL_2"/>
    <property type="match status" value="2"/>
</dbReference>
<keyword id="KW-0903">Direct protein sequencing</keyword>
<keyword id="KW-1015">Disulfide bond</keyword>
<keyword id="KW-0646">Protease inhibitor</keyword>
<keyword id="KW-0677">Repeat</keyword>
<keyword id="KW-0964">Secreted</keyword>
<keyword id="KW-0722">Serine protease inhibitor</keyword>
<feature type="chain" id="PRO_0000073038" description="Double-headed protease inhibitor, submandibular gland">
    <location>
        <begin position="1"/>
        <end position="122"/>
    </location>
</feature>
<feature type="domain" description="Kazal-like 1" evidence="1">
    <location>
        <begin position="10"/>
        <end position="70"/>
    </location>
</feature>
<feature type="domain" description="Kazal-like 2" evidence="1">
    <location>
        <begin position="71"/>
        <end position="121"/>
    </location>
</feature>
<feature type="site" description="Reactive bond 1 for trypsin">
    <location>
        <begin position="30"/>
        <end position="31"/>
    </location>
</feature>
<feature type="site" description="Reactive bond 2 for elastase">
    <location>
        <begin position="81"/>
        <end position="82"/>
    </location>
</feature>
<feature type="disulfide bond" evidence="1">
    <location>
        <begin position="16"/>
        <end position="50"/>
    </location>
</feature>
<feature type="disulfide bond" evidence="1">
    <location>
        <begin position="28"/>
        <end position="47"/>
    </location>
</feature>
<feature type="disulfide bond" evidence="1">
    <location>
        <begin position="36"/>
        <end position="68"/>
    </location>
</feature>
<feature type="disulfide bond" evidence="1">
    <location>
        <begin position="72"/>
        <end position="101"/>
    </location>
</feature>
<feature type="disulfide bond" evidence="1">
    <location>
        <begin position="79"/>
        <end position="98"/>
    </location>
</feature>
<feature type="disulfide bond" evidence="1">
    <location>
        <begin position="87"/>
        <end position="119"/>
    </location>
</feature>